<dbReference type="EC" id="2.3.1.-" evidence="2"/>
<dbReference type="EMBL" id="CP000046">
    <property type="protein sequence ID" value="AAW38584.1"/>
    <property type="molecule type" value="Genomic_DNA"/>
</dbReference>
<dbReference type="RefSeq" id="WP_000379821.1">
    <property type="nucleotide sequence ID" value="NZ_JBGOFO010000001.1"/>
</dbReference>
<dbReference type="SMR" id="Q5HCY3"/>
<dbReference type="KEGG" id="sac:SACOL2582"/>
<dbReference type="HOGENOM" id="CLU_005679_11_2_9"/>
<dbReference type="Proteomes" id="UP000000530">
    <property type="component" value="Chromosome"/>
</dbReference>
<dbReference type="GO" id="GO:0005886">
    <property type="term" value="C:plasma membrane"/>
    <property type="evidence" value="ECO:0007669"/>
    <property type="project" value="UniProtKB-SubCell"/>
</dbReference>
<dbReference type="GO" id="GO:0016747">
    <property type="term" value="F:acyltransferase activity, transferring groups other than amino-acyl groups"/>
    <property type="evidence" value="ECO:0007669"/>
    <property type="project" value="InterPro"/>
</dbReference>
<dbReference type="GO" id="GO:0009103">
    <property type="term" value="P:lipopolysaccharide biosynthetic process"/>
    <property type="evidence" value="ECO:0007669"/>
    <property type="project" value="TreeGrafter"/>
</dbReference>
<dbReference type="CDD" id="cd01840">
    <property type="entry name" value="SGNH_hydrolase_yrhL_like"/>
    <property type="match status" value="1"/>
</dbReference>
<dbReference type="FunFam" id="3.40.50.1110:FF:000006">
    <property type="entry name" value="O-acetyltransferase OatA"/>
    <property type="match status" value="1"/>
</dbReference>
<dbReference type="Gene3D" id="3.40.50.1110">
    <property type="entry name" value="SGNH hydrolase"/>
    <property type="match status" value="1"/>
</dbReference>
<dbReference type="InterPro" id="IPR002656">
    <property type="entry name" value="Acyl_transf_3_dom"/>
</dbReference>
<dbReference type="InterPro" id="IPR050879">
    <property type="entry name" value="Acyltransferase_3"/>
</dbReference>
<dbReference type="InterPro" id="IPR036514">
    <property type="entry name" value="SGNH_hydro_sf"/>
</dbReference>
<dbReference type="PANTHER" id="PTHR23028">
    <property type="entry name" value="ACETYLTRANSFERASE"/>
    <property type="match status" value="1"/>
</dbReference>
<dbReference type="PANTHER" id="PTHR23028:SF53">
    <property type="entry name" value="ACYL_TRANSF_3 DOMAIN-CONTAINING PROTEIN"/>
    <property type="match status" value="1"/>
</dbReference>
<dbReference type="Pfam" id="PF01757">
    <property type="entry name" value="Acyl_transf_3"/>
    <property type="match status" value="1"/>
</dbReference>
<dbReference type="SUPFAM" id="SSF52266">
    <property type="entry name" value="SGNH hydrolase"/>
    <property type="match status" value="1"/>
</dbReference>
<name>OATA_STAAC</name>
<reference key="1">
    <citation type="journal article" date="2005" name="J. Bacteriol.">
        <title>Insights on evolution of virulence and resistance from the complete genome analysis of an early methicillin-resistant Staphylococcus aureus strain and a biofilm-producing methicillin-resistant Staphylococcus epidermidis strain.</title>
        <authorList>
            <person name="Gill S.R."/>
            <person name="Fouts D.E."/>
            <person name="Archer G.L."/>
            <person name="Mongodin E.F."/>
            <person name="DeBoy R.T."/>
            <person name="Ravel J."/>
            <person name="Paulsen I.T."/>
            <person name="Kolonay J.F."/>
            <person name="Brinkac L.M."/>
            <person name="Beanan M.J."/>
            <person name="Dodson R.J."/>
            <person name="Daugherty S.C."/>
            <person name="Madupu R."/>
            <person name="Angiuoli S.V."/>
            <person name="Durkin A.S."/>
            <person name="Haft D.H."/>
            <person name="Vamathevan J.J."/>
            <person name="Khouri H."/>
            <person name="Utterback T.R."/>
            <person name="Lee C."/>
            <person name="Dimitrov G."/>
            <person name="Jiang L."/>
            <person name="Qin H."/>
            <person name="Weidman J."/>
            <person name="Tran K."/>
            <person name="Kang K.H."/>
            <person name="Hance I.R."/>
            <person name="Nelson K.E."/>
            <person name="Fraser C.M."/>
        </authorList>
    </citation>
    <scope>NUCLEOTIDE SEQUENCE [LARGE SCALE GENOMIC DNA]</scope>
    <source>
        <strain>COL</strain>
    </source>
</reference>
<keyword id="KW-0012">Acyltransferase</keyword>
<keyword id="KW-1003">Cell membrane</keyword>
<keyword id="KW-0472">Membrane</keyword>
<keyword id="KW-0808">Transferase</keyword>
<keyword id="KW-0812">Transmembrane</keyword>
<keyword id="KW-1133">Transmembrane helix</keyword>
<evidence type="ECO:0000250" key="1"/>
<evidence type="ECO:0000250" key="2">
    <source>
        <dbReference type="UniProtKB" id="Q2FV54"/>
    </source>
</evidence>
<evidence type="ECO:0000255" key="3"/>
<evidence type="ECO:0000305" key="4"/>
<accession>Q5HCY3</accession>
<organism>
    <name type="scientific">Staphylococcus aureus (strain COL)</name>
    <dbReference type="NCBI Taxonomy" id="93062"/>
    <lineage>
        <taxon>Bacteria</taxon>
        <taxon>Bacillati</taxon>
        <taxon>Bacillota</taxon>
        <taxon>Bacilli</taxon>
        <taxon>Bacillales</taxon>
        <taxon>Staphylococcaceae</taxon>
        <taxon>Staphylococcus</taxon>
    </lineage>
</organism>
<comment type="function">
    <text evidence="2">Responsible for O-acetylation at the C(6)-hydroxyl group of N-acetylmuramyl residues, forming the corresponding N,6-O-diacetylmuramic acid of the peptidoglycan. O-acetylation of the peptidoglycan is the major determinant for lysozyme resistance.</text>
</comment>
<comment type="subcellular location">
    <subcellularLocation>
        <location evidence="1">Cell membrane</location>
        <topology evidence="1">Multi-pass membrane protein</topology>
    </subcellularLocation>
</comment>
<comment type="similarity">
    <text evidence="4">Belongs to the acyltransferase 3 family.</text>
</comment>
<feature type="chain" id="PRO_0000208085" description="O-acetyltransferase OatA">
    <location>
        <begin position="1"/>
        <end position="603"/>
    </location>
</feature>
<feature type="transmembrane region" description="Helical" evidence="3">
    <location>
        <begin position="17"/>
        <end position="37"/>
    </location>
</feature>
<feature type="transmembrane region" description="Helical" evidence="3">
    <location>
        <begin position="45"/>
        <end position="65"/>
    </location>
</feature>
<feature type="transmembrane region" description="Helical" evidence="3">
    <location>
        <begin position="87"/>
        <end position="107"/>
    </location>
</feature>
<feature type="transmembrane region" description="Helical" evidence="3">
    <location>
        <begin position="148"/>
        <end position="168"/>
    </location>
</feature>
<feature type="transmembrane region" description="Helical" evidence="3">
    <location>
        <begin position="177"/>
        <end position="197"/>
    </location>
</feature>
<feature type="transmembrane region" description="Helical" evidence="3">
    <location>
        <begin position="211"/>
        <end position="231"/>
    </location>
</feature>
<feature type="transmembrane region" description="Helical" evidence="3">
    <location>
        <begin position="239"/>
        <end position="259"/>
    </location>
</feature>
<feature type="transmembrane region" description="Helical" evidence="3">
    <location>
        <begin position="268"/>
        <end position="288"/>
    </location>
</feature>
<feature type="transmembrane region" description="Helical" evidence="3">
    <location>
        <begin position="311"/>
        <end position="331"/>
    </location>
</feature>
<feature type="transmembrane region" description="Helical" evidence="3">
    <location>
        <begin position="333"/>
        <end position="353"/>
    </location>
</feature>
<feature type="transmembrane region" description="Helical" evidence="3">
    <location>
        <begin position="382"/>
        <end position="402"/>
    </location>
</feature>
<feature type="active site" evidence="2">
    <location>
        <position position="453"/>
    </location>
</feature>
<feature type="active site" evidence="2">
    <location>
        <position position="575"/>
    </location>
</feature>
<feature type="active site" evidence="2">
    <location>
        <position position="578"/>
    </location>
</feature>
<sequence length="603" mass="69099">MDTKDFKRLEKMYSPRYLPGLDGLRAFAVIGIIIYHLNAQWLSGGFLGVDTFFVISGYLITSLLISEYYRTQKIDLLEFWKRRLKRLIPAVLFLICVVLTFTLIFKPELIIQMKRDAIAAIFYVSNWWYISQNVDYFNQFAIEPLKHLWSLAIEEQFYLLFPLVITFLLHRFKPRNIIQTLFIVSLISLGLMIVIHFITGDNSRVYFGTDTRLQTLLLGCILAFIWPPFALKKDISKKIVVSLDIIGISGFAVLMTLFFIVGDQDQWIYNGGFYIISFATLFIIAIAVHPSSLFAKFLSMKPLLIIGKRSYSLYLWHYPIIVFVNSYYVQGQIPVYVYIIEILLTALMAEISYRFIETPIRKKGFKAFAFLPKKKGQFARTVLVILLLVPSIVVLSGQFDALGKQHEAEKKEKKTEFKTTKKKVVKKDKQEDKQTANSKEDIKKSSPLLIGDSVMVDIGNVFTKKIPNAQIDGKVGRQLVDATPIVKSQYKDYAKKGQKVVVELGTNGAFTKDQLNELLDSFGKADIYLVSIRVPRDYEGRINKLIYEAAEKRSNVHLVDWYKASAGHPEYFAYDGIHLEYAGSKALTDLIVKTMETHATNKK</sequence>
<gene>
    <name type="primary">oatA</name>
    <name type="ordered locus">SACOL2582</name>
</gene>
<proteinExistence type="inferred from homology"/>
<protein>
    <recommendedName>
        <fullName>O-acetyltransferase OatA</fullName>
        <ecNumber evidence="2">2.3.1.-</ecNumber>
    </recommendedName>
</protein>